<accession>B0BPI2</accession>
<dbReference type="EC" id="1.5.1.5" evidence="1"/>
<dbReference type="EC" id="3.5.4.9" evidence="1"/>
<dbReference type="EMBL" id="CP000687">
    <property type="protein sequence ID" value="ABY69467.1"/>
    <property type="molecule type" value="Genomic_DNA"/>
</dbReference>
<dbReference type="RefSeq" id="WP_005597425.1">
    <property type="nucleotide sequence ID" value="NC_010278.1"/>
</dbReference>
<dbReference type="SMR" id="B0BPI2"/>
<dbReference type="GeneID" id="48599085"/>
<dbReference type="KEGG" id="apj:APJL_0909"/>
<dbReference type="HOGENOM" id="CLU_034045_2_1_6"/>
<dbReference type="UniPathway" id="UPA00193"/>
<dbReference type="Proteomes" id="UP000008547">
    <property type="component" value="Chromosome"/>
</dbReference>
<dbReference type="GO" id="GO:0005829">
    <property type="term" value="C:cytosol"/>
    <property type="evidence" value="ECO:0007669"/>
    <property type="project" value="TreeGrafter"/>
</dbReference>
<dbReference type="GO" id="GO:0004477">
    <property type="term" value="F:methenyltetrahydrofolate cyclohydrolase activity"/>
    <property type="evidence" value="ECO:0007669"/>
    <property type="project" value="UniProtKB-UniRule"/>
</dbReference>
<dbReference type="GO" id="GO:0004488">
    <property type="term" value="F:methylenetetrahydrofolate dehydrogenase (NADP+) activity"/>
    <property type="evidence" value="ECO:0007669"/>
    <property type="project" value="UniProtKB-UniRule"/>
</dbReference>
<dbReference type="GO" id="GO:0000105">
    <property type="term" value="P:L-histidine biosynthetic process"/>
    <property type="evidence" value="ECO:0007669"/>
    <property type="project" value="UniProtKB-KW"/>
</dbReference>
<dbReference type="GO" id="GO:0009086">
    <property type="term" value="P:methionine biosynthetic process"/>
    <property type="evidence" value="ECO:0007669"/>
    <property type="project" value="UniProtKB-KW"/>
</dbReference>
<dbReference type="GO" id="GO:0006164">
    <property type="term" value="P:purine nucleotide biosynthetic process"/>
    <property type="evidence" value="ECO:0007669"/>
    <property type="project" value="UniProtKB-KW"/>
</dbReference>
<dbReference type="GO" id="GO:0035999">
    <property type="term" value="P:tetrahydrofolate interconversion"/>
    <property type="evidence" value="ECO:0007669"/>
    <property type="project" value="UniProtKB-UniRule"/>
</dbReference>
<dbReference type="CDD" id="cd01080">
    <property type="entry name" value="NAD_bind_m-THF_DH_Cyclohyd"/>
    <property type="match status" value="1"/>
</dbReference>
<dbReference type="FunFam" id="3.40.50.10860:FF:000001">
    <property type="entry name" value="Bifunctional protein FolD"/>
    <property type="match status" value="1"/>
</dbReference>
<dbReference type="FunFam" id="3.40.50.720:FF:000006">
    <property type="entry name" value="Bifunctional protein FolD"/>
    <property type="match status" value="1"/>
</dbReference>
<dbReference type="Gene3D" id="3.40.50.10860">
    <property type="entry name" value="Leucine Dehydrogenase, chain A, domain 1"/>
    <property type="match status" value="1"/>
</dbReference>
<dbReference type="Gene3D" id="3.40.50.720">
    <property type="entry name" value="NAD(P)-binding Rossmann-like Domain"/>
    <property type="match status" value="1"/>
</dbReference>
<dbReference type="HAMAP" id="MF_01576">
    <property type="entry name" value="THF_DHG_CYH"/>
    <property type="match status" value="1"/>
</dbReference>
<dbReference type="InterPro" id="IPR046346">
    <property type="entry name" value="Aminoacid_DH-like_N_sf"/>
</dbReference>
<dbReference type="InterPro" id="IPR036291">
    <property type="entry name" value="NAD(P)-bd_dom_sf"/>
</dbReference>
<dbReference type="InterPro" id="IPR000672">
    <property type="entry name" value="THF_DH/CycHdrlase"/>
</dbReference>
<dbReference type="InterPro" id="IPR020630">
    <property type="entry name" value="THF_DH/CycHdrlase_cat_dom"/>
</dbReference>
<dbReference type="InterPro" id="IPR020867">
    <property type="entry name" value="THF_DH/CycHdrlase_CS"/>
</dbReference>
<dbReference type="InterPro" id="IPR020631">
    <property type="entry name" value="THF_DH/CycHdrlase_NAD-bd_dom"/>
</dbReference>
<dbReference type="NCBIfam" id="NF008058">
    <property type="entry name" value="PRK10792.1"/>
    <property type="match status" value="1"/>
</dbReference>
<dbReference type="NCBIfam" id="NF010783">
    <property type="entry name" value="PRK14186.1"/>
    <property type="match status" value="1"/>
</dbReference>
<dbReference type="PANTHER" id="PTHR48099:SF5">
    <property type="entry name" value="C-1-TETRAHYDROFOLATE SYNTHASE, CYTOPLASMIC"/>
    <property type="match status" value="1"/>
</dbReference>
<dbReference type="PANTHER" id="PTHR48099">
    <property type="entry name" value="C-1-TETRAHYDROFOLATE SYNTHASE, CYTOPLASMIC-RELATED"/>
    <property type="match status" value="1"/>
</dbReference>
<dbReference type="Pfam" id="PF00763">
    <property type="entry name" value="THF_DHG_CYH"/>
    <property type="match status" value="1"/>
</dbReference>
<dbReference type="Pfam" id="PF02882">
    <property type="entry name" value="THF_DHG_CYH_C"/>
    <property type="match status" value="1"/>
</dbReference>
<dbReference type="PRINTS" id="PR00085">
    <property type="entry name" value="THFDHDRGNASE"/>
</dbReference>
<dbReference type="SUPFAM" id="SSF53223">
    <property type="entry name" value="Aminoacid dehydrogenase-like, N-terminal domain"/>
    <property type="match status" value="1"/>
</dbReference>
<dbReference type="SUPFAM" id="SSF51735">
    <property type="entry name" value="NAD(P)-binding Rossmann-fold domains"/>
    <property type="match status" value="1"/>
</dbReference>
<dbReference type="PROSITE" id="PS00766">
    <property type="entry name" value="THF_DHG_CYH_1"/>
    <property type="match status" value="1"/>
</dbReference>
<dbReference type="PROSITE" id="PS00767">
    <property type="entry name" value="THF_DHG_CYH_2"/>
    <property type="match status" value="1"/>
</dbReference>
<proteinExistence type="inferred from homology"/>
<feature type="chain" id="PRO_1000196745" description="Bifunctional protein FolD">
    <location>
        <begin position="1"/>
        <end position="285"/>
    </location>
</feature>
<feature type="binding site" evidence="1">
    <location>
        <begin position="166"/>
        <end position="168"/>
    </location>
    <ligand>
        <name>NADP(+)</name>
        <dbReference type="ChEBI" id="CHEBI:58349"/>
    </ligand>
</feature>
<feature type="binding site" evidence="1">
    <location>
        <position position="191"/>
    </location>
    <ligand>
        <name>NADP(+)</name>
        <dbReference type="ChEBI" id="CHEBI:58349"/>
    </ligand>
</feature>
<feature type="binding site" evidence="1">
    <location>
        <position position="232"/>
    </location>
    <ligand>
        <name>NADP(+)</name>
        <dbReference type="ChEBI" id="CHEBI:58349"/>
    </ligand>
</feature>
<protein>
    <recommendedName>
        <fullName evidence="1">Bifunctional protein FolD</fullName>
    </recommendedName>
    <domain>
        <recommendedName>
            <fullName evidence="1">Methylenetetrahydrofolate dehydrogenase</fullName>
            <ecNumber evidence="1">1.5.1.5</ecNumber>
        </recommendedName>
    </domain>
    <domain>
        <recommendedName>
            <fullName evidence="1">Methenyltetrahydrofolate cyclohydrolase</fullName>
            <ecNumber evidence="1">3.5.4.9</ecNumber>
        </recommendedName>
    </domain>
</protein>
<comment type="function">
    <text evidence="1">Catalyzes the oxidation of 5,10-methylenetetrahydrofolate to 5,10-methenyltetrahydrofolate and then the hydrolysis of 5,10-methenyltetrahydrofolate to 10-formyltetrahydrofolate.</text>
</comment>
<comment type="catalytic activity">
    <reaction evidence="1">
        <text>(6R)-5,10-methylene-5,6,7,8-tetrahydrofolate + NADP(+) = (6R)-5,10-methenyltetrahydrofolate + NADPH</text>
        <dbReference type="Rhea" id="RHEA:22812"/>
        <dbReference type="ChEBI" id="CHEBI:15636"/>
        <dbReference type="ChEBI" id="CHEBI:57455"/>
        <dbReference type="ChEBI" id="CHEBI:57783"/>
        <dbReference type="ChEBI" id="CHEBI:58349"/>
        <dbReference type="EC" id="1.5.1.5"/>
    </reaction>
</comment>
<comment type="catalytic activity">
    <reaction evidence="1">
        <text>(6R)-5,10-methenyltetrahydrofolate + H2O = (6R)-10-formyltetrahydrofolate + H(+)</text>
        <dbReference type="Rhea" id="RHEA:23700"/>
        <dbReference type="ChEBI" id="CHEBI:15377"/>
        <dbReference type="ChEBI" id="CHEBI:15378"/>
        <dbReference type="ChEBI" id="CHEBI:57455"/>
        <dbReference type="ChEBI" id="CHEBI:195366"/>
        <dbReference type="EC" id="3.5.4.9"/>
    </reaction>
</comment>
<comment type="pathway">
    <text evidence="1">One-carbon metabolism; tetrahydrofolate interconversion.</text>
</comment>
<comment type="subunit">
    <text evidence="1">Homodimer.</text>
</comment>
<comment type="similarity">
    <text evidence="1">Belongs to the tetrahydrofolate dehydrogenase/cyclohydrolase family.</text>
</comment>
<gene>
    <name evidence="1" type="primary">folD</name>
    <name type="ordered locus">APJL_0909</name>
</gene>
<sequence>MTAHIISGTAVAKQVKANIAEQIQAYTAQDKRKPGLAVILVGMDPASQVYVNSKRKSCAEIGIESKSYDLPAETGEAELLAIIEQLNHDDSVDGILVQLPLPKQIDATKVTEAIVPHKDVDGFHPYNVGRLCQKIPTLRSCTPYGVMKLLESTGVNLAGLHAVVVGASNIVGRPMAMELLLAGCTVTVTHSRTKDLAYHVSQADIVVAGVGKPNFVKGEWIKPGAIVIDVGINRVEGKLIGDVEYSAAEAKASFITPVPGGVGPMTVAMLMQNTLQAYQVHLQAV</sequence>
<keyword id="KW-0028">Amino-acid biosynthesis</keyword>
<keyword id="KW-0368">Histidine biosynthesis</keyword>
<keyword id="KW-0378">Hydrolase</keyword>
<keyword id="KW-0486">Methionine biosynthesis</keyword>
<keyword id="KW-0511">Multifunctional enzyme</keyword>
<keyword id="KW-0521">NADP</keyword>
<keyword id="KW-0554">One-carbon metabolism</keyword>
<keyword id="KW-0560">Oxidoreductase</keyword>
<keyword id="KW-0658">Purine biosynthesis</keyword>
<name>FOLD_ACTPJ</name>
<evidence type="ECO:0000255" key="1">
    <source>
        <dbReference type="HAMAP-Rule" id="MF_01576"/>
    </source>
</evidence>
<organism>
    <name type="scientific">Actinobacillus pleuropneumoniae serotype 3 (strain JL03)</name>
    <dbReference type="NCBI Taxonomy" id="434271"/>
    <lineage>
        <taxon>Bacteria</taxon>
        <taxon>Pseudomonadati</taxon>
        <taxon>Pseudomonadota</taxon>
        <taxon>Gammaproteobacteria</taxon>
        <taxon>Pasteurellales</taxon>
        <taxon>Pasteurellaceae</taxon>
        <taxon>Actinobacillus</taxon>
    </lineage>
</organism>
<reference key="1">
    <citation type="journal article" date="2008" name="PLoS ONE">
        <title>Genome biology of Actinobacillus pleuropneumoniae JL03, an isolate of serotype 3 prevalent in China.</title>
        <authorList>
            <person name="Xu Z."/>
            <person name="Zhou Y."/>
            <person name="Li L."/>
            <person name="Zhou R."/>
            <person name="Xiao S."/>
            <person name="Wan Y."/>
            <person name="Zhang S."/>
            <person name="Wang K."/>
            <person name="Li W."/>
            <person name="Li L."/>
            <person name="Jin H."/>
            <person name="Kang M."/>
            <person name="Dalai B."/>
            <person name="Li T."/>
            <person name="Liu L."/>
            <person name="Cheng Y."/>
            <person name="Zhang L."/>
            <person name="Xu T."/>
            <person name="Zheng H."/>
            <person name="Pu S."/>
            <person name="Wang B."/>
            <person name="Gu W."/>
            <person name="Zhang X.L."/>
            <person name="Zhu G.-F."/>
            <person name="Wang S."/>
            <person name="Zhao G.-P."/>
            <person name="Chen H."/>
        </authorList>
    </citation>
    <scope>NUCLEOTIDE SEQUENCE [LARGE SCALE GENOMIC DNA]</scope>
    <source>
        <strain>JL03</strain>
    </source>
</reference>